<gene>
    <name evidence="1" type="primary">cynS</name>
    <name type="ordered locus">Pput_3239</name>
</gene>
<accession>A5W5F5</accession>
<name>CYNS_PSEP1</name>
<dbReference type="EC" id="4.2.1.104" evidence="1"/>
<dbReference type="EMBL" id="CP000712">
    <property type="protein sequence ID" value="ABQ79365.1"/>
    <property type="molecule type" value="Genomic_DNA"/>
</dbReference>
<dbReference type="SMR" id="A5W5F5"/>
<dbReference type="KEGG" id="ppf:Pput_3239"/>
<dbReference type="eggNOG" id="COG1513">
    <property type="taxonomic scope" value="Bacteria"/>
</dbReference>
<dbReference type="HOGENOM" id="CLU_103452_1_0_6"/>
<dbReference type="GO" id="GO:0008824">
    <property type="term" value="F:cyanate hydratase activity"/>
    <property type="evidence" value="ECO:0007669"/>
    <property type="project" value="UniProtKB-UniRule"/>
</dbReference>
<dbReference type="GO" id="GO:0003677">
    <property type="term" value="F:DNA binding"/>
    <property type="evidence" value="ECO:0007669"/>
    <property type="project" value="InterPro"/>
</dbReference>
<dbReference type="GO" id="GO:0009439">
    <property type="term" value="P:cyanate metabolic process"/>
    <property type="evidence" value="ECO:0007669"/>
    <property type="project" value="UniProtKB-UniRule"/>
</dbReference>
<dbReference type="CDD" id="cd00559">
    <property type="entry name" value="Cyanase_C"/>
    <property type="match status" value="1"/>
</dbReference>
<dbReference type="Gene3D" id="3.30.1160.10">
    <property type="entry name" value="Cyanate lyase, C-terminal domain"/>
    <property type="match status" value="1"/>
</dbReference>
<dbReference type="Gene3D" id="1.10.260.40">
    <property type="entry name" value="lambda repressor-like DNA-binding domains"/>
    <property type="match status" value="1"/>
</dbReference>
<dbReference type="HAMAP" id="MF_00535">
    <property type="entry name" value="Cyanate_hydrat"/>
    <property type="match status" value="1"/>
</dbReference>
<dbReference type="InterPro" id="IPR008076">
    <property type="entry name" value="Cyanase"/>
</dbReference>
<dbReference type="InterPro" id="IPR003712">
    <property type="entry name" value="Cyanate_lyase_C"/>
</dbReference>
<dbReference type="InterPro" id="IPR036581">
    <property type="entry name" value="Cyanate_lyase_C_sf"/>
</dbReference>
<dbReference type="InterPro" id="IPR048564">
    <property type="entry name" value="CYNS_N"/>
</dbReference>
<dbReference type="InterPro" id="IPR010982">
    <property type="entry name" value="Lambda_DNA-bd_dom_sf"/>
</dbReference>
<dbReference type="NCBIfam" id="TIGR00673">
    <property type="entry name" value="cynS"/>
    <property type="match status" value="1"/>
</dbReference>
<dbReference type="NCBIfam" id="NF002773">
    <property type="entry name" value="PRK02866.1"/>
    <property type="match status" value="1"/>
</dbReference>
<dbReference type="PANTHER" id="PTHR34186">
    <property type="entry name" value="CYANATE HYDRATASE"/>
    <property type="match status" value="1"/>
</dbReference>
<dbReference type="PANTHER" id="PTHR34186:SF2">
    <property type="entry name" value="CYANATE HYDRATASE"/>
    <property type="match status" value="1"/>
</dbReference>
<dbReference type="Pfam" id="PF02560">
    <property type="entry name" value="Cyanate_lyase"/>
    <property type="match status" value="1"/>
</dbReference>
<dbReference type="Pfam" id="PF21291">
    <property type="entry name" value="CYNS_N"/>
    <property type="match status" value="1"/>
</dbReference>
<dbReference type="PIRSF" id="PIRSF001263">
    <property type="entry name" value="Cyanate_hydratas"/>
    <property type="match status" value="1"/>
</dbReference>
<dbReference type="PRINTS" id="PR01693">
    <property type="entry name" value="CYANASE"/>
</dbReference>
<dbReference type="SMART" id="SM01116">
    <property type="entry name" value="Cyanate_lyase"/>
    <property type="match status" value="1"/>
</dbReference>
<dbReference type="SUPFAM" id="SSF55234">
    <property type="entry name" value="Cyanase C-terminal domain"/>
    <property type="match status" value="1"/>
</dbReference>
<dbReference type="SUPFAM" id="SSF47413">
    <property type="entry name" value="lambda repressor-like DNA-binding domains"/>
    <property type="match status" value="1"/>
</dbReference>
<sequence>MDKLEMHHLIMAAKARKGLSWDDLANAVGKAPVWLASVCYGMNSAPLEVATHLCEVLELDDQVAATLTAFPVKGWDKSIPQDPLIYRLYEVVGVYGPPLKDVIQEKFGDGIMSAIDFSMHVERIEDPKGDRVLLTLNGKFLPYRSW</sequence>
<evidence type="ECO:0000255" key="1">
    <source>
        <dbReference type="HAMAP-Rule" id="MF_00535"/>
    </source>
</evidence>
<reference key="1">
    <citation type="submission" date="2007-05" db="EMBL/GenBank/DDBJ databases">
        <title>Complete sequence of Pseudomonas putida F1.</title>
        <authorList>
            <consortium name="US DOE Joint Genome Institute"/>
            <person name="Copeland A."/>
            <person name="Lucas S."/>
            <person name="Lapidus A."/>
            <person name="Barry K."/>
            <person name="Detter J.C."/>
            <person name="Glavina del Rio T."/>
            <person name="Hammon N."/>
            <person name="Israni S."/>
            <person name="Dalin E."/>
            <person name="Tice H."/>
            <person name="Pitluck S."/>
            <person name="Chain P."/>
            <person name="Malfatti S."/>
            <person name="Shin M."/>
            <person name="Vergez L."/>
            <person name="Schmutz J."/>
            <person name="Larimer F."/>
            <person name="Land M."/>
            <person name="Hauser L."/>
            <person name="Kyrpides N."/>
            <person name="Lykidis A."/>
            <person name="Parales R."/>
            <person name="Richardson P."/>
        </authorList>
    </citation>
    <scope>NUCLEOTIDE SEQUENCE [LARGE SCALE GENOMIC DNA]</scope>
    <source>
        <strain>ATCC 700007 / DSM 6899 / JCM 31910 / BCRC 17059 / LMG 24140 / F1</strain>
    </source>
</reference>
<feature type="chain" id="PRO_1000051486" description="Cyanate hydratase">
    <location>
        <begin position="1"/>
        <end position="146"/>
    </location>
</feature>
<feature type="active site" evidence="1">
    <location>
        <position position="87"/>
    </location>
</feature>
<feature type="active site" evidence="1">
    <location>
        <position position="90"/>
    </location>
</feature>
<feature type="active site" evidence="1">
    <location>
        <position position="113"/>
    </location>
</feature>
<comment type="function">
    <text evidence="1">Catalyzes the reaction of cyanate with bicarbonate to produce ammonia and carbon dioxide.</text>
</comment>
<comment type="catalytic activity">
    <reaction evidence="1">
        <text>cyanate + hydrogencarbonate + 3 H(+) = NH4(+) + 2 CO2</text>
        <dbReference type="Rhea" id="RHEA:11120"/>
        <dbReference type="ChEBI" id="CHEBI:15378"/>
        <dbReference type="ChEBI" id="CHEBI:16526"/>
        <dbReference type="ChEBI" id="CHEBI:17544"/>
        <dbReference type="ChEBI" id="CHEBI:28938"/>
        <dbReference type="ChEBI" id="CHEBI:29195"/>
        <dbReference type="EC" id="4.2.1.104"/>
    </reaction>
</comment>
<comment type="similarity">
    <text evidence="1">Belongs to the cyanase family.</text>
</comment>
<proteinExistence type="inferred from homology"/>
<protein>
    <recommendedName>
        <fullName evidence="1">Cyanate hydratase</fullName>
        <shortName evidence="1">Cyanase</shortName>
        <ecNumber evidence="1">4.2.1.104</ecNumber>
    </recommendedName>
    <alternativeName>
        <fullName evidence="1">Cyanate hydrolase</fullName>
    </alternativeName>
    <alternativeName>
        <fullName evidence="1">Cyanate lyase</fullName>
    </alternativeName>
</protein>
<organism>
    <name type="scientific">Pseudomonas putida (strain ATCC 700007 / DSM 6899 / JCM 31910 / BCRC 17059 / LMG 24140 / F1)</name>
    <dbReference type="NCBI Taxonomy" id="351746"/>
    <lineage>
        <taxon>Bacteria</taxon>
        <taxon>Pseudomonadati</taxon>
        <taxon>Pseudomonadota</taxon>
        <taxon>Gammaproteobacteria</taxon>
        <taxon>Pseudomonadales</taxon>
        <taxon>Pseudomonadaceae</taxon>
        <taxon>Pseudomonas</taxon>
    </lineage>
</organism>
<keyword id="KW-0456">Lyase</keyword>